<protein>
    <recommendedName>
        <fullName evidence="1">Ribonuclease HII</fullName>
        <shortName evidence="1">RNase HII</shortName>
        <ecNumber evidence="1">3.1.26.4</ecNumber>
    </recommendedName>
</protein>
<reference key="1">
    <citation type="journal article" date="1999" name="Genetics">
        <title>Divergence of the hyperthermophilic archaea Pyrococcus furiosus and P. horikoshii inferred from complete genomic sequences.</title>
        <authorList>
            <person name="Maeder D.L."/>
            <person name="Weiss R.B."/>
            <person name="Dunn D.M."/>
            <person name="Cherry J.L."/>
            <person name="Gonzalez J.M."/>
            <person name="DiRuggiero J."/>
            <person name="Robb F.T."/>
        </authorList>
    </citation>
    <scope>NUCLEOTIDE SEQUENCE [LARGE SCALE GENOMIC DNA]</scope>
    <source>
        <strain>ATCC 43587 / DSM 3638 / JCM 8422 / Vc1</strain>
    </source>
</reference>
<organism>
    <name type="scientific">Pyrococcus furiosus (strain ATCC 43587 / DSM 3638 / JCM 8422 / Vc1)</name>
    <dbReference type="NCBI Taxonomy" id="186497"/>
    <lineage>
        <taxon>Archaea</taxon>
        <taxon>Methanobacteriati</taxon>
        <taxon>Methanobacteriota</taxon>
        <taxon>Thermococci</taxon>
        <taxon>Thermococcales</taxon>
        <taxon>Thermococcaceae</taxon>
        <taxon>Pyrococcus</taxon>
    </lineage>
</organism>
<keyword id="KW-0963">Cytoplasm</keyword>
<keyword id="KW-0255">Endonuclease</keyword>
<keyword id="KW-0378">Hydrolase</keyword>
<keyword id="KW-0464">Manganese</keyword>
<keyword id="KW-0479">Metal-binding</keyword>
<keyword id="KW-0540">Nuclease</keyword>
<keyword id="KW-1185">Reference proteome</keyword>
<accession>Q8U036</accession>
<sequence>MKIGGIDEAGRGPAIGPLVVATVVVDEKNIEKLRNIGVKDSKQLTPHERKNLFSQITSIADDYKIVIVSPEEIDNRSGTMNELEVEKFALALNSLQIKPALIYADAADVDANRFASLIERRLNYKAKIIAEHKADAKYPVVSAASILAKVVRDEEIEKLKKQYGDFGSGYPSDPKTKKWLEEYYKKHNSFPPIVRRTWETVRKIEESIKAKKSQLTLDKFFKKP</sequence>
<comment type="function">
    <text evidence="1">Endonuclease that specifically degrades the RNA of RNA-DNA hybrids.</text>
</comment>
<comment type="catalytic activity">
    <reaction evidence="1">
        <text>Endonucleolytic cleavage to 5'-phosphomonoester.</text>
        <dbReference type="EC" id="3.1.26.4"/>
    </reaction>
</comment>
<comment type="cofactor">
    <cofactor evidence="1">
        <name>Mn(2+)</name>
        <dbReference type="ChEBI" id="CHEBI:29035"/>
    </cofactor>
    <cofactor evidence="1">
        <name>Mg(2+)</name>
        <dbReference type="ChEBI" id="CHEBI:18420"/>
    </cofactor>
    <text evidence="1">Manganese or magnesium. Binds 1 divalent metal ion per monomer in the absence of substrate. May bind a second metal ion after substrate binding.</text>
</comment>
<comment type="subcellular location">
    <subcellularLocation>
        <location evidence="1">Cytoplasm</location>
    </subcellularLocation>
</comment>
<comment type="similarity">
    <text evidence="1">Belongs to the RNase HII family.</text>
</comment>
<feature type="chain" id="PRO_0000111669" description="Ribonuclease HII">
    <location>
        <begin position="1"/>
        <end position="224"/>
    </location>
</feature>
<feature type="domain" description="RNase H type-2" evidence="2">
    <location>
        <begin position="1"/>
        <end position="210"/>
    </location>
</feature>
<feature type="binding site" evidence="1">
    <location>
        <position position="7"/>
    </location>
    <ligand>
        <name>a divalent metal cation</name>
        <dbReference type="ChEBI" id="CHEBI:60240"/>
    </ligand>
</feature>
<feature type="binding site" evidence="1">
    <location>
        <position position="8"/>
    </location>
    <ligand>
        <name>a divalent metal cation</name>
        <dbReference type="ChEBI" id="CHEBI:60240"/>
    </ligand>
</feature>
<feature type="binding site" evidence="1">
    <location>
        <position position="105"/>
    </location>
    <ligand>
        <name>a divalent metal cation</name>
        <dbReference type="ChEBI" id="CHEBI:60240"/>
    </ligand>
</feature>
<dbReference type="EC" id="3.1.26.4" evidence="1"/>
<dbReference type="EMBL" id="AE009950">
    <property type="protein sequence ID" value="AAL81905.1"/>
    <property type="molecule type" value="Genomic_DNA"/>
</dbReference>
<dbReference type="RefSeq" id="WP_011012922.1">
    <property type="nucleotide sequence ID" value="NZ_CP023154.1"/>
</dbReference>
<dbReference type="SMR" id="Q8U036"/>
<dbReference type="STRING" id="186497.PF1781"/>
<dbReference type="PaxDb" id="186497-PF1781"/>
<dbReference type="GeneID" id="41713599"/>
<dbReference type="KEGG" id="pfu:PF1781"/>
<dbReference type="PATRIC" id="fig|186497.12.peg.1852"/>
<dbReference type="eggNOG" id="arCOG04121">
    <property type="taxonomic scope" value="Archaea"/>
</dbReference>
<dbReference type="HOGENOM" id="CLU_036532_0_4_2"/>
<dbReference type="OrthoDB" id="33866at2157"/>
<dbReference type="PhylomeDB" id="Q8U036"/>
<dbReference type="BRENDA" id="3.1.26.4">
    <property type="organism ID" value="5243"/>
</dbReference>
<dbReference type="Proteomes" id="UP000001013">
    <property type="component" value="Chromosome"/>
</dbReference>
<dbReference type="GO" id="GO:0005737">
    <property type="term" value="C:cytoplasm"/>
    <property type="evidence" value="ECO:0007669"/>
    <property type="project" value="UniProtKB-SubCell"/>
</dbReference>
<dbReference type="GO" id="GO:0032299">
    <property type="term" value="C:ribonuclease H2 complex"/>
    <property type="evidence" value="ECO:0007669"/>
    <property type="project" value="TreeGrafter"/>
</dbReference>
<dbReference type="GO" id="GO:0030145">
    <property type="term" value="F:manganese ion binding"/>
    <property type="evidence" value="ECO:0007669"/>
    <property type="project" value="UniProtKB-UniRule"/>
</dbReference>
<dbReference type="GO" id="GO:0003723">
    <property type="term" value="F:RNA binding"/>
    <property type="evidence" value="ECO:0007669"/>
    <property type="project" value="InterPro"/>
</dbReference>
<dbReference type="GO" id="GO:0004523">
    <property type="term" value="F:RNA-DNA hybrid ribonuclease activity"/>
    <property type="evidence" value="ECO:0007669"/>
    <property type="project" value="UniProtKB-UniRule"/>
</dbReference>
<dbReference type="GO" id="GO:0043137">
    <property type="term" value="P:DNA replication, removal of RNA primer"/>
    <property type="evidence" value="ECO:0007669"/>
    <property type="project" value="TreeGrafter"/>
</dbReference>
<dbReference type="GO" id="GO:0006298">
    <property type="term" value="P:mismatch repair"/>
    <property type="evidence" value="ECO:0007669"/>
    <property type="project" value="TreeGrafter"/>
</dbReference>
<dbReference type="CDD" id="cd07180">
    <property type="entry name" value="RNase_HII_archaea_like"/>
    <property type="match status" value="1"/>
</dbReference>
<dbReference type="Gene3D" id="3.30.420.10">
    <property type="entry name" value="Ribonuclease H-like superfamily/Ribonuclease H"/>
    <property type="match status" value="1"/>
</dbReference>
<dbReference type="HAMAP" id="MF_00052_A">
    <property type="entry name" value="RNase_HII_A"/>
    <property type="match status" value="1"/>
</dbReference>
<dbReference type="InterPro" id="IPR004649">
    <property type="entry name" value="RNase_H2_suA"/>
</dbReference>
<dbReference type="InterPro" id="IPR001352">
    <property type="entry name" value="RNase_HII/HIII"/>
</dbReference>
<dbReference type="InterPro" id="IPR024567">
    <property type="entry name" value="RNase_HII/HIII_dom"/>
</dbReference>
<dbReference type="InterPro" id="IPR020787">
    <property type="entry name" value="RNase_HII_arc"/>
</dbReference>
<dbReference type="InterPro" id="IPR012337">
    <property type="entry name" value="RNaseH-like_sf"/>
</dbReference>
<dbReference type="InterPro" id="IPR036397">
    <property type="entry name" value="RNaseH_sf"/>
</dbReference>
<dbReference type="NCBIfam" id="TIGR00729">
    <property type="entry name" value="ribonuclease HII"/>
    <property type="match status" value="1"/>
</dbReference>
<dbReference type="PANTHER" id="PTHR10954:SF23">
    <property type="entry name" value="RIBONUCLEASE"/>
    <property type="match status" value="1"/>
</dbReference>
<dbReference type="PANTHER" id="PTHR10954">
    <property type="entry name" value="RIBONUCLEASE H2 SUBUNIT A"/>
    <property type="match status" value="1"/>
</dbReference>
<dbReference type="Pfam" id="PF01351">
    <property type="entry name" value="RNase_HII"/>
    <property type="match status" value="1"/>
</dbReference>
<dbReference type="SUPFAM" id="SSF53098">
    <property type="entry name" value="Ribonuclease H-like"/>
    <property type="match status" value="1"/>
</dbReference>
<dbReference type="PROSITE" id="PS51975">
    <property type="entry name" value="RNASE_H_2"/>
    <property type="match status" value="1"/>
</dbReference>
<name>RNH2_PYRFU</name>
<proteinExistence type="inferred from homology"/>
<gene>
    <name evidence="1" type="primary">rnhB</name>
    <name type="ordered locus">PF1781</name>
</gene>
<evidence type="ECO:0000255" key="1">
    <source>
        <dbReference type="HAMAP-Rule" id="MF_00052"/>
    </source>
</evidence>
<evidence type="ECO:0000255" key="2">
    <source>
        <dbReference type="PROSITE-ProRule" id="PRU01319"/>
    </source>
</evidence>